<gene>
    <name evidence="1" type="primary">rimM</name>
    <name type="ordered locus">DR_2010</name>
</gene>
<name>RIMM_DEIRA</name>
<protein>
    <recommendedName>
        <fullName evidence="1">Ribosome maturation factor RimM</fullName>
    </recommendedName>
</protein>
<dbReference type="EMBL" id="AE000513">
    <property type="protein sequence ID" value="AAF11557.1"/>
    <property type="molecule type" value="Genomic_DNA"/>
</dbReference>
<dbReference type="PIR" id="G75326">
    <property type="entry name" value="G75326"/>
</dbReference>
<dbReference type="RefSeq" id="NP_295733.1">
    <property type="nucleotide sequence ID" value="NC_001263.1"/>
</dbReference>
<dbReference type="RefSeq" id="WP_010888643.1">
    <property type="nucleotide sequence ID" value="NC_001263.1"/>
</dbReference>
<dbReference type="SMR" id="Q9RSW1"/>
<dbReference type="STRING" id="243230.DR_2010"/>
<dbReference type="PaxDb" id="243230-DR_2010"/>
<dbReference type="EnsemblBacteria" id="AAF11557">
    <property type="protein sequence ID" value="AAF11557"/>
    <property type="gene ID" value="DR_2010"/>
</dbReference>
<dbReference type="GeneID" id="69518247"/>
<dbReference type="KEGG" id="dra:DR_2010"/>
<dbReference type="PATRIC" id="fig|243230.17.peg.2233"/>
<dbReference type="eggNOG" id="COG0806">
    <property type="taxonomic scope" value="Bacteria"/>
</dbReference>
<dbReference type="HOGENOM" id="CLU_077636_0_1_0"/>
<dbReference type="InParanoid" id="Q9RSW1"/>
<dbReference type="OrthoDB" id="9810331at2"/>
<dbReference type="Proteomes" id="UP000002524">
    <property type="component" value="Chromosome 1"/>
</dbReference>
<dbReference type="GO" id="GO:0005829">
    <property type="term" value="C:cytosol"/>
    <property type="evidence" value="ECO:0000318"/>
    <property type="project" value="GO_Central"/>
</dbReference>
<dbReference type="GO" id="GO:0005840">
    <property type="term" value="C:ribosome"/>
    <property type="evidence" value="ECO:0007669"/>
    <property type="project" value="InterPro"/>
</dbReference>
<dbReference type="GO" id="GO:0043022">
    <property type="term" value="F:ribosome binding"/>
    <property type="evidence" value="ECO:0007669"/>
    <property type="project" value="InterPro"/>
</dbReference>
<dbReference type="GO" id="GO:0030490">
    <property type="term" value="P:maturation of SSU-rRNA"/>
    <property type="evidence" value="ECO:0000318"/>
    <property type="project" value="GO_Central"/>
</dbReference>
<dbReference type="Gene3D" id="2.30.30.240">
    <property type="entry name" value="PRC-barrel domain"/>
    <property type="match status" value="1"/>
</dbReference>
<dbReference type="Gene3D" id="2.40.30.60">
    <property type="entry name" value="RimM"/>
    <property type="match status" value="1"/>
</dbReference>
<dbReference type="HAMAP" id="MF_00014">
    <property type="entry name" value="Ribosome_mat_RimM"/>
    <property type="match status" value="1"/>
</dbReference>
<dbReference type="InterPro" id="IPR027275">
    <property type="entry name" value="PRC-brl_dom"/>
</dbReference>
<dbReference type="InterPro" id="IPR011033">
    <property type="entry name" value="PRC_barrel-like_sf"/>
</dbReference>
<dbReference type="InterPro" id="IPR011961">
    <property type="entry name" value="RimM"/>
</dbReference>
<dbReference type="InterPro" id="IPR002676">
    <property type="entry name" value="RimM_N"/>
</dbReference>
<dbReference type="InterPro" id="IPR036976">
    <property type="entry name" value="RimM_N_sf"/>
</dbReference>
<dbReference type="NCBIfam" id="TIGR02273">
    <property type="entry name" value="16S_RimM"/>
    <property type="match status" value="1"/>
</dbReference>
<dbReference type="NCBIfam" id="NF010403">
    <property type="entry name" value="PRK13829.1"/>
    <property type="match status" value="1"/>
</dbReference>
<dbReference type="PANTHER" id="PTHR33692">
    <property type="entry name" value="RIBOSOME MATURATION FACTOR RIMM"/>
    <property type="match status" value="1"/>
</dbReference>
<dbReference type="PANTHER" id="PTHR33692:SF1">
    <property type="entry name" value="RIBOSOME MATURATION FACTOR RIMM"/>
    <property type="match status" value="1"/>
</dbReference>
<dbReference type="Pfam" id="PF05239">
    <property type="entry name" value="PRC"/>
    <property type="match status" value="1"/>
</dbReference>
<dbReference type="Pfam" id="PF01782">
    <property type="entry name" value="RimM"/>
    <property type="match status" value="1"/>
</dbReference>
<dbReference type="SUPFAM" id="SSF50346">
    <property type="entry name" value="PRC-barrel domain"/>
    <property type="match status" value="1"/>
</dbReference>
<feature type="chain" id="PRO_0000163284" description="Ribosome maturation factor RimM">
    <location>
        <begin position="1"/>
        <end position="188"/>
    </location>
</feature>
<feature type="domain" description="PRC barrel" evidence="1">
    <location>
        <begin position="98"/>
        <end position="174"/>
    </location>
</feature>
<feature type="region of interest" description="Disordered" evidence="2">
    <location>
        <begin position="169"/>
        <end position="188"/>
    </location>
</feature>
<feature type="compositionally biased region" description="Acidic residues" evidence="2">
    <location>
        <begin position="179"/>
        <end position="188"/>
    </location>
</feature>
<accession>Q9RSW1</accession>
<comment type="function">
    <text evidence="1">An accessory protein needed during the final step in the assembly of 30S ribosomal subunit, possibly for assembly of the head region. Essential for efficient processing of 16S rRNA. May be needed both before and after RbfA during the maturation of 16S rRNA. It has affinity for free ribosomal 30S subunits but not for 70S ribosomes.</text>
</comment>
<comment type="subunit">
    <text evidence="1">Binds ribosomal protein uS19.</text>
</comment>
<comment type="subcellular location">
    <subcellularLocation>
        <location evidence="1">Cytoplasm</location>
    </subcellularLocation>
</comment>
<comment type="domain">
    <text evidence="1">The PRC barrel domain binds ribosomal protein uS19.</text>
</comment>
<comment type="similarity">
    <text evidence="1">Belongs to the RimM family.</text>
</comment>
<organism>
    <name type="scientific">Deinococcus radiodurans (strain ATCC 13939 / DSM 20539 / JCM 16871 / CCUG 27074 / LMG 4051 / NBRC 15346 / NCIMB 9279 / VKM B-1422 / R1)</name>
    <dbReference type="NCBI Taxonomy" id="243230"/>
    <lineage>
        <taxon>Bacteria</taxon>
        <taxon>Thermotogati</taxon>
        <taxon>Deinococcota</taxon>
        <taxon>Deinococci</taxon>
        <taxon>Deinococcales</taxon>
        <taxon>Deinococcaceae</taxon>
        <taxon>Deinococcus</taxon>
    </lineage>
</organism>
<proteinExistence type="inferred from homology"/>
<reference key="1">
    <citation type="journal article" date="1999" name="Science">
        <title>Genome sequence of the radioresistant bacterium Deinococcus radiodurans R1.</title>
        <authorList>
            <person name="White O."/>
            <person name="Eisen J.A."/>
            <person name="Heidelberg J.F."/>
            <person name="Hickey E.K."/>
            <person name="Peterson J.D."/>
            <person name="Dodson R.J."/>
            <person name="Haft D.H."/>
            <person name="Gwinn M.L."/>
            <person name="Nelson W.C."/>
            <person name="Richardson D.L."/>
            <person name="Moffat K.S."/>
            <person name="Qin H."/>
            <person name="Jiang L."/>
            <person name="Pamphile W."/>
            <person name="Crosby M."/>
            <person name="Shen M."/>
            <person name="Vamathevan J.J."/>
            <person name="Lam P."/>
            <person name="McDonald L.A."/>
            <person name="Utterback T.R."/>
            <person name="Zalewski C."/>
            <person name="Makarova K.S."/>
            <person name="Aravind L."/>
            <person name="Daly M.J."/>
            <person name="Minton K.W."/>
            <person name="Fleischmann R.D."/>
            <person name="Ketchum K.A."/>
            <person name="Nelson K.E."/>
            <person name="Salzberg S.L."/>
            <person name="Smith H.O."/>
            <person name="Venter J.C."/>
            <person name="Fraser C.M."/>
        </authorList>
    </citation>
    <scope>NUCLEOTIDE SEQUENCE [LARGE SCALE GENOMIC DNA]</scope>
    <source>
        <strain>ATCC 13939 / DSM 20539 / JCM 16871 / CCUG 27074 / LMG 4051 / NBRC 15346 / NCIMB 9279 / VKM B-1422 / R1</strain>
    </source>
</reference>
<evidence type="ECO:0000255" key="1">
    <source>
        <dbReference type="HAMAP-Rule" id="MF_00014"/>
    </source>
</evidence>
<evidence type="ECO:0000256" key="2">
    <source>
        <dbReference type="SAM" id="MobiDB-lite"/>
    </source>
</evidence>
<keyword id="KW-0143">Chaperone</keyword>
<keyword id="KW-0963">Cytoplasm</keyword>
<keyword id="KW-1185">Reference proteome</keyword>
<keyword id="KW-0690">Ribosome biogenesis</keyword>
<keyword id="KW-0698">rRNA processing</keyword>
<sequence length="188" mass="19686">MTRPEASGPPDATRLGHLLGPHGVQGGIKLYVLGDPAQVLALKRVYVESRGWLSLRRAEGMPPNLVLYLAGVSSREGAEELRGLQVYATDAELPDLEEGTFYYHDLRGLEVYGAGGERLGTVSDVMDAGHQDLLVVDYGGGTSFVPLQAPYVEVPLAGGKPGAVHLTADAPAGLIGPEPGEEDGAAES</sequence>